<name>RS5_HISS1</name>
<feature type="chain" id="PRO_1000086016" description="Small ribosomal subunit protein uS5">
    <location>
        <begin position="1"/>
        <end position="166"/>
    </location>
</feature>
<feature type="domain" description="S5 DRBM" evidence="1">
    <location>
        <begin position="11"/>
        <end position="74"/>
    </location>
</feature>
<keyword id="KW-0687">Ribonucleoprotein</keyword>
<keyword id="KW-0689">Ribosomal protein</keyword>
<keyword id="KW-0694">RNA-binding</keyword>
<keyword id="KW-0699">rRNA-binding</keyword>
<accession>Q0I145</accession>
<organism>
    <name type="scientific">Histophilus somni (strain 129Pt)</name>
    <name type="common">Haemophilus somnus</name>
    <dbReference type="NCBI Taxonomy" id="205914"/>
    <lineage>
        <taxon>Bacteria</taxon>
        <taxon>Pseudomonadati</taxon>
        <taxon>Pseudomonadota</taxon>
        <taxon>Gammaproteobacteria</taxon>
        <taxon>Pasteurellales</taxon>
        <taxon>Pasteurellaceae</taxon>
        <taxon>Histophilus</taxon>
    </lineage>
</organism>
<protein>
    <recommendedName>
        <fullName evidence="1">Small ribosomal subunit protein uS5</fullName>
    </recommendedName>
    <alternativeName>
        <fullName evidence="2">30S ribosomal protein S5</fullName>
    </alternativeName>
</protein>
<dbReference type="EMBL" id="CP000436">
    <property type="protein sequence ID" value="ABI24358.1"/>
    <property type="molecule type" value="Genomic_DNA"/>
</dbReference>
<dbReference type="SMR" id="Q0I145"/>
<dbReference type="KEGG" id="hso:HS_0077"/>
<dbReference type="eggNOG" id="COG0098">
    <property type="taxonomic scope" value="Bacteria"/>
</dbReference>
<dbReference type="HOGENOM" id="CLU_065898_2_2_6"/>
<dbReference type="GO" id="GO:0015935">
    <property type="term" value="C:small ribosomal subunit"/>
    <property type="evidence" value="ECO:0007669"/>
    <property type="project" value="InterPro"/>
</dbReference>
<dbReference type="GO" id="GO:0019843">
    <property type="term" value="F:rRNA binding"/>
    <property type="evidence" value="ECO:0007669"/>
    <property type="project" value="UniProtKB-UniRule"/>
</dbReference>
<dbReference type="GO" id="GO:0003735">
    <property type="term" value="F:structural constituent of ribosome"/>
    <property type="evidence" value="ECO:0007669"/>
    <property type="project" value="InterPro"/>
</dbReference>
<dbReference type="GO" id="GO:0006412">
    <property type="term" value="P:translation"/>
    <property type="evidence" value="ECO:0007669"/>
    <property type="project" value="UniProtKB-UniRule"/>
</dbReference>
<dbReference type="FunFam" id="3.30.160.20:FF:000001">
    <property type="entry name" value="30S ribosomal protein S5"/>
    <property type="match status" value="1"/>
</dbReference>
<dbReference type="FunFam" id="3.30.230.10:FF:000002">
    <property type="entry name" value="30S ribosomal protein S5"/>
    <property type="match status" value="1"/>
</dbReference>
<dbReference type="Gene3D" id="3.30.160.20">
    <property type="match status" value="1"/>
</dbReference>
<dbReference type="Gene3D" id="3.30.230.10">
    <property type="match status" value="1"/>
</dbReference>
<dbReference type="HAMAP" id="MF_01307_B">
    <property type="entry name" value="Ribosomal_uS5_B"/>
    <property type="match status" value="1"/>
</dbReference>
<dbReference type="InterPro" id="IPR020568">
    <property type="entry name" value="Ribosomal_Su5_D2-typ_SF"/>
</dbReference>
<dbReference type="InterPro" id="IPR000851">
    <property type="entry name" value="Ribosomal_uS5"/>
</dbReference>
<dbReference type="InterPro" id="IPR005712">
    <property type="entry name" value="Ribosomal_uS5_bac-type"/>
</dbReference>
<dbReference type="InterPro" id="IPR005324">
    <property type="entry name" value="Ribosomal_uS5_C"/>
</dbReference>
<dbReference type="InterPro" id="IPR013810">
    <property type="entry name" value="Ribosomal_uS5_N"/>
</dbReference>
<dbReference type="InterPro" id="IPR018192">
    <property type="entry name" value="Ribosomal_uS5_N_CS"/>
</dbReference>
<dbReference type="InterPro" id="IPR014721">
    <property type="entry name" value="Ribsml_uS5_D2-typ_fold_subgr"/>
</dbReference>
<dbReference type="NCBIfam" id="TIGR01021">
    <property type="entry name" value="rpsE_bact"/>
    <property type="match status" value="1"/>
</dbReference>
<dbReference type="PANTHER" id="PTHR48277">
    <property type="entry name" value="MITOCHONDRIAL RIBOSOMAL PROTEIN S5"/>
    <property type="match status" value="1"/>
</dbReference>
<dbReference type="PANTHER" id="PTHR48277:SF1">
    <property type="entry name" value="MITOCHONDRIAL RIBOSOMAL PROTEIN S5"/>
    <property type="match status" value="1"/>
</dbReference>
<dbReference type="Pfam" id="PF00333">
    <property type="entry name" value="Ribosomal_S5"/>
    <property type="match status" value="1"/>
</dbReference>
<dbReference type="Pfam" id="PF03719">
    <property type="entry name" value="Ribosomal_S5_C"/>
    <property type="match status" value="1"/>
</dbReference>
<dbReference type="SUPFAM" id="SSF54768">
    <property type="entry name" value="dsRNA-binding domain-like"/>
    <property type="match status" value="1"/>
</dbReference>
<dbReference type="SUPFAM" id="SSF54211">
    <property type="entry name" value="Ribosomal protein S5 domain 2-like"/>
    <property type="match status" value="1"/>
</dbReference>
<dbReference type="PROSITE" id="PS00585">
    <property type="entry name" value="RIBOSOMAL_S5"/>
    <property type="match status" value="1"/>
</dbReference>
<dbReference type="PROSITE" id="PS50881">
    <property type="entry name" value="S5_DSRBD"/>
    <property type="match status" value="1"/>
</dbReference>
<gene>
    <name evidence="1" type="primary">rpsE</name>
    <name type="ordered locus">HS_0077</name>
</gene>
<reference key="1">
    <citation type="journal article" date="2007" name="J. Bacteriol.">
        <title>Complete genome sequence of Haemophilus somnus (Histophilus somni) strain 129Pt and comparison to Haemophilus ducreyi 35000HP and Haemophilus influenzae Rd.</title>
        <authorList>
            <person name="Challacombe J.F."/>
            <person name="Duncan A.J."/>
            <person name="Brettin T.S."/>
            <person name="Bruce D."/>
            <person name="Chertkov O."/>
            <person name="Detter J.C."/>
            <person name="Han C.S."/>
            <person name="Misra M."/>
            <person name="Richardson P."/>
            <person name="Tapia R."/>
            <person name="Thayer N."/>
            <person name="Xie G."/>
            <person name="Inzana T.J."/>
        </authorList>
    </citation>
    <scope>NUCLEOTIDE SEQUENCE [LARGE SCALE GENOMIC DNA]</scope>
    <source>
        <strain>129Pt</strain>
    </source>
</reference>
<comment type="function">
    <text evidence="1">With S4 and S12 plays an important role in translational accuracy.</text>
</comment>
<comment type="function">
    <text evidence="1">Located at the back of the 30S subunit body where it stabilizes the conformation of the head with respect to the body.</text>
</comment>
<comment type="subunit">
    <text evidence="1">Part of the 30S ribosomal subunit. Contacts proteins S4 and S8.</text>
</comment>
<comment type="domain">
    <text>The N-terminal domain interacts with the head of the 30S subunit; the C-terminal domain interacts with the body and contacts protein S4. The interaction surface between S4 and S5 is involved in control of translational fidelity.</text>
</comment>
<comment type="similarity">
    <text evidence="1">Belongs to the universal ribosomal protein uS5 family.</text>
</comment>
<sequence length="166" mass="17448">MASIEKQTGELQEKLIAVNRVSKTVKGGRIMSFTALTVVGDGNGRVGFGYGKAREVPAAIQKAMEKARRNMITVALNEGTLQHPIKGSHTGSRVFMQPASEGTGIIAGGAMRAVLEVAGVRNVLSKAYGSTNPINVVRATIDALANMKSPEMVAAKRGKTVDEILG</sequence>
<proteinExistence type="inferred from homology"/>
<evidence type="ECO:0000255" key="1">
    <source>
        <dbReference type="HAMAP-Rule" id="MF_01307"/>
    </source>
</evidence>
<evidence type="ECO:0000305" key="2"/>